<proteinExistence type="inferred from homology"/>
<dbReference type="EC" id="1.1.1.86" evidence="1"/>
<dbReference type="EMBL" id="BX548174">
    <property type="protein sequence ID" value="CAE19774.1"/>
    <property type="molecule type" value="Genomic_DNA"/>
</dbReference>
<dbReference type="RefSeq" id="WP_011132949.1">
    <property type="nucleotide sequence ID" value="NC_005072.1"/>
</dbReference>
<dbReference type="SMR" id="Q7V0F0"/>
<dbReference type="STRING" id="59919.PMM1315"/>
<dbReference type="KEGG" id="pmm:PMM1315"/>
<dbReference type="eggNOG" id="COG0059">
    <property type="taxonomic scope" value="Bacteria"/>
</dbReference>
<dbReference type="HOGENOM" id="CLU_033821_0_1_3"/>
<dbReference type="OrthoDB" id="9804088at2"/>
<dbReference type="UniPathway" id="UPA00047">
    <property type="reaction ID" value="UER00056"/>
</dbReference>
<dbReference type="UniPathway" id="UPA00049">
    <property type="reaction ID" value="UER00060"/>
</dbReference>
<dbReference type="Proteomes" id="UP000001026">
    <property type="component" value="Chromosome"/>
</dbReference>
<dbReference type="GO" id="GO:0005829">
    <property type="term" value="C:cytosol"/>
    <property type="evidence" value="ECO:0007669"/>
    <property type="project" value="TreeGrafter"/>
</dbReference>
<dbReference type="GO" id="GO:0004455">
    <property type="term" value="F:ketol-acid reductoisomerase activity"/>
    <property type="evidence" value="ECO:0007669"/>
    <property type="project" value="UniProtKB-UniRule"/>
</dbReference>
<dbReference type="GO" id="GO:0000287">
    <property type="term" value="F:magnesium ion binding"/>
    <property type="evidence" value="ECO:0007669"/>
    <property type="project" value="UniProtKB-UniRule"/>
</dbReference>
<dbReference type="GO" id="GO:0050661">
    <property type="term" value="F:NADP binding"/>
    <property type="evidence" value="ECO:0007669"/>
    <property type="project" value="InterPro"/>
</dbReference>
<dbReference type="GO" id="GO:0009097">
    <property type="term" value="P:isoleucine biosynthetic process"/>
    <property type="evidence" value="ECO:0007669"/>
    <property type="project" value="UniProtKB-UniRule"/>
</dbReference>
<dbReference type="GO" id="GO:0009099">
    <property type="term" value="P:L-valine biosynthetic process"/>
    <property type="evidence" value="ECO:0007669"/>
    <property type="project" value="UniProtKB-UniRule"/>
</dbReference>
<dbReference type="FunFam" id="3.40.50.720:FF:000023">
    <property type="entry name" value="Ketol-acid reductoisomerase (NADP(+))"/>
    <property type="match status" value="1"/>
</dbReference>
<dbReference type="Gene3D" id="6.10.240.10">
    <property type="match status" value="1"/>
</dbReference>
<dbReference type="Gene3D" id="3.40.50.720">
    <property type="entry name" value="NAD(P)-binding Rossmann-like Domain"/>
    <property type="match status" value="1"/>
</dbReference>
<dbReference type="HAMAP" id="MF_00435">
    <property type="entry name" value="IlvC"/>
    <property type="match status" value="1"/>
</dbReference>
<dbReference type="InterPro" id="IPR008927">
    <property type="entry name" value="6-PGluconate_DH-like_C_sf"/>
</dbReference>
<dbReference type="InterPro" id="IPR013023">
    <property type="entry name" value="KARI"/>
</dbReference>
<dbReference type="InterPro" id="IPR000506">
    <property type="entry name" value="KARI_C"/>
</dbReference>
<dbReference type="InterPro" id="IPR013116">
    <property type="entry name" value="KARI_N"/>
</dbReference>
<dbReference type="InterPro" id="IPR014359">
    <property type="entry name" value="KARI_prok"/>
</dbReference>
<dbReference type="InterPro" id="IPR036291">
    <property type="entry name" value="NAD(P)-bd_dom_sf"/>
</dbReference>
<dbReference type="NCBIfam" id="TIGR00465">
    <property type="entry name" value="ilvC"/>
    <property type="match status" value="1"/>
</dbReference>
<dbReference type="NCBIfam" id="NF004017">
    <property type="entry name" value="PRK05479.1"/>
    <property type="match status" value="1"/>
</dbReference>
<dbReference type="NCBIfam" id="NF009940">
    <property type="entry name" value="PRK13403.1"/>
    <property type="match status" value="1"/>
</dbReference>
<dbReference type="PANTHER" id="PTHR21371">
    <property type="entry name" value="KETOL-ACID REDUCTOISOMERASE, MITOCHONDRIAL"/>
    <property type="match status" value="1"/>
</dbReference>
<dbReference type="PANTHER" id="PTHR21371:SF1">
    <property type="entry name" value="KETOL-ACID REDUCTOISOMERASE, MITOCHONDRIAL"/>
    <property type="match status" value="1"/>
</dbReference>
<dbReference type="Pfam" id="PF01450">
    <property type="entry name" value="KARI_C"/>
    <property type="match status" value="1"/>
</dbReference>
<dbReference type="Pfam" id="PF07991">
    <property type="entry name" value="KARI_N"/>
    <property type="match status" value="1"/>
</dbReference>
<dbReference type="PIRSF" id="PIRSF000116">
    <property type="entry name" value="IlvC_gammaproteo"/>
    <property type="match status" value="1"/>
</dbReference>
<dbReference type="SUPFAM" id="SSF48179">
    <property type="entry name" value="6-phosphogluconate dehydrogenase C-terminal domain-like"/>
    <property type="match status" value="1"/>
</dbReference>
<dbReference type="SUPFAM" id="SSF51735">
    <property type="entry name" value="NAD(P)-binding Rossmann-fold domains"/>
    <property type="match status" value="1"/>
</dbReference>
<dbReference type="PROSITE" id="PS51851">
    <property type="entry name" value="KARI_C"/>
    <property type="match status" value="1"/>
</dbReference>
<dbReference type="PROSITE" id="PS51850">
    <property type="entry name" value="KARI_N"/>
    <property type="match status" value="1"/>
</dbReference>
<reference key="1">
    <citation type="journal article" date="2003" name="Nature">
        <title>Genome divergence in two Prochlorococcus ecotypes reflects oceanic niche differentiation.</title>
        <authorList>
            <person name="Rocap G."/>
            <person name="Larimer F.W."/>
            <person name="Lamerdin J.E."/>
            <person name="Malfatti S."/>
            <person name="Chain P."/>
            <person name="Ahlgren N.A."/>
            <person name="Arellano A."/>
            <person name="Coleman M."/>
            <person name="Hauser L."/>
            <person name="Hess W.R."/>
            <person name="Johnson Z.I."/>
            <person name="Land M.L."/>
            <person name="Lindell D."/>
            <person name="Post A.F."/>
            <person name="Regala W."/>
            <person name="Shah M."/>
            <person name="Shaw S.L."/>
            <person name="Steglich C."/>
            <person name="Sullivan M.B."/>
            <person name="Ting C.S."/>
            <person name="Tolonen A."/>
            <person name="Webb E.A."/>
            <person name="Zinser E.R."/>
            <person name="Chisholm S.W."/>
        </authorList>
    </citation>
    <scope>NUCLEOTIDE SEQUENCE [LARGE SCALE GENOMIC DNA]</scope>
    <source>
        <strain>CCMP1986 / NIES-2087 / MED4</strain>
    </source>
</reference>
<sequence>MTQLFYDTDADLSLLKNKTIAIIGYGSQGHAHALNLKDSGMDVIVGLYKGSNSESKAINDGLKVFTVSEACEKADWIMILLPDEFQKDVYIKEIEPNLKEGKILSFAHGFNIRFELIKPPNFVDVVMIAPKGPGHTVRWEYQNGQGVPALFAVEQDYSGNARSLAMSYAKGIGGTRAGILETNFKEETETDLFGEQAVLCGGLSELVKSGFETLVEAGYQPELAYFECLHEVKLIVDLMVKGGLSQMRDSISNTAEYGDYVSGKRLINNETKKEMQKILKDIQDGTFAKNFVDECDNNKPLMTKLREENSKHEIEKVGKGLRAMFSWLK</sequence>
<name>ILVC_PROMP</name>
<keyword id="KW-0028">Amino-acid biosynthesis</keyword>
<keyword id="KW-0100">Branched-chain amino acid biosynthesis</keyword>
<keyword id="KW-0460">Magnesium</keyword>
<keyword id="KW-0479">Metal-binding</keyword>
<keyword id="KW-0521">NADP</keyword>
<keyword id="KW-0560">Oxidoreductase</keyword>
<accession>Q7V0F0</accession>
<feature type="chain" id="PRO_0000151341" description="Ketol-acid reductoisomerase (NADP(+))">
    <location>
        <begin position="1"/>
        <end position="329"/>
    </location>
</feature>
<feature type="domain" description="KARI N-terminal Rossmann" evidence="2">
    <location>
        <begin position="2"/>
        <end position="182"/>
    </location>
</feature>
<feature type="domain" description="KARI C-terminal knotted" evidence="3">
    <location>
        <begin position="183"/>
        <end position="328"/>
    </location>
</feature>
<feature type="active site" evidence="1">
    <location>
        <position position="108"/>
    </location>
</feature>
<feature type="binding site" evidence="1">
    <location>
        <begin position="25"/>
        <end position="28"/>
    </location>
    <ligand>
        <name>NADP(+)</name>
        <dbReference type="ChEBI" id="CHEBI:58349"/>
    </ligand>
</feature>
<feature type="binding site" evidence="1">
    <location>
        <position position="51"/>
    </location>
    <ligand>
        <name>NADP(+)</name>
        <dbReference type="ChEBI" id="CHEBI:58349"/>
    </ligand>
</feature>
<feature type="binding site" evidence="1">
    <location>
        <position position="53"/>
    </location>
    <ligand>
        <name>NADP(+)</name>
        <dbReference type="ChEBI" id="CHEBI:58349"/>
    </ligand>
</feature>
<feature type="binding site" evidence="1">
    <location>
        <begin position="83"/>
        <end position="86"/>
    </location>
    <ligand>
        <name>NADP(+)</name>
        <dbReference type="ChEBI" id="CHEBI:58349"/>
    </ligand>
</feature>
<feature type="binding site" evidence="1">
    <location>
        <position position="134"/>
    </location>
    <ligand>
        <name>NADP(+)</name>
        <dbReference type="ChEBI" id="CHEBI:58349"/>
    </ligand>
</feature>
<feature type="binding site" evidence="1">
    <location>
        <position position="191"/>
    </location>
    <ligand>
        <name>Mg(2+)</name>
        <dbReference type="ChEBI" id="CHEBI:18420"/>
        <label>1</label>
    </ligand>
</feature>
<feature type="binding site" evidence="1">
    <location>
        <position position="191"/>
    </location>
    <ligand>
        <name>Mg(2+)</name>
        <dbReference type="ChEBI" id="CHEBI:18420"/>
        <label>2</label>
    </ligand>
</feature>
<feature type="binding site" evidence="1">
    <location>
        <position position="195"/>
    </location>
    <ligand>
        <name>Mg(2+)</name>
        <dbReference type="ChEBI" id="CHEBI:18420"/>
        <label>1</label>
    </ligand>
</feature>
<feature type="binding site" evidence="1">
    <location>
        <position position="227"/>
    </location>
    <ligand>
        <name>Mg(2+)</name>
        <dbReference type="ChEBI" id="CHEBI:18420"/>
        <label>2</label>
    </ligand>
</feature>
<feature type="binding site" evidence="1">
    <location>
        <position position="231"/>
    </location>
    <ligand>
        <name>Mg(2+)</name>
        <dbReference type="ChEBI" id="CHEBI:18420"/>
        <label>2</label>
    </ligand>
</feature>
<feature type="binding site" evidence="1">
    <location>
        <position position="252"/>
    </location>
    <ligand>
        <name>substrate</name>
    </ligand>
</feature>
<gene>
    <name evidence="1" type="primary">ilvC</name>
    <name type="ordered locus">PMM1315</name>
</gene>
<organism>
    <name type="scientific">Prochlorococcus marinus subsp. pastoris (strain CCMP1986 / NIES-2087 / MED4)</name>
    <dbReference type="NCBI Taxonomy" id="59919"/>
    <lineage>
        <taxon>Bacteria</taxon>
        <taxon>Bacillati</taxon>
        <taxon>Cyanobacteriota</taxon>
        <taxon>Cyanophyceae</taxon>
        <taxon>Synechococcales</taxon>
        <taxon>Prochlorococcaceae</taxon>
        <taxon>Prochlorococcus</taxon>
    </lineage>
</organism>
<comment type="function">
    <text evidence="1">Involved in the biosynthesis of branched-chain amino acids (BCAA). Catalyzes an alkyl-migration followed by a ketol-acid reduction of (S)-2-acetolactate (S2AL) to yield (R)-2,3-dihydroxy-isovalerate. In the isomerase reaction, S2AL is rearranged via a Mg-dependent methyl migration to produce 3-hydroxy-3-methyl-2-ketobutyrate (HMKB). In the reductase reaction, this 2-ketoacid undergoes a metal-dependent reduction by NADPH to yield (R)-2,3-dihydroxy-isovalerate.</text>
</comment>
<comment type="catalytic activity">
    <reaction evidence="1">
        <text>(2R)-2,3-dihydroxy-3-methylbutanoate + NADP(+) = (2S)-2-acetolactate + NADPH + H(+)</text>
        <dbReference type="Rhea" id="RHEA:22068"/>
        <dbReference type="ChEBI" id="CHEBI:15378"/>
        <dbReference type="ChEBI" id="CHEBI:49072"/>
        <dbReference type="ChEBI" id="CHEBI:57783"/>
        <dbReference type="ChEBI" id="CHEBI:58349"/>
        <dbReference type="ChEBI" id="CHEBI:58476"/>
        <dbReference type="EC" id="1.1.1.86"/>
    </reaction>
</comment>
<comment type="catalytic activity">
    <reaction evidence="1">
        <text>(2R,3R)-2,3-dihydroxy-3-methylpentanoate + NADP(+) = (S)-2-ethyl-2-hydroxy-3-oxobutanoate + NADPH + H(+)</text>
        <dbReference type="Rhea" id="RHEA:13493"/>
        <dbReference type="ChEBI" id="CHEBI:15378"/>
        <dbReference type="ChEBI" id="CHEBI:49256"/>
        <dbReference type="ChEBI" id="CHEBI:49258"/>
        <dbReference type="ChEBI" id="CHEBI:57783"/>
        <dbReference type="ChEBI" id="CHEBI:58349"/>
        <dbReference type="EC" id="1.1.1.86"/>
    </reaction>
</comment>
<comment type="cofactor">
    <cofactor evidence="1">
        <name>Mg(2+)</name>
        <dbReference type="ChEBI" id="CHEBI:18420"/>
    </cofactor>
    <text evidence="1">Binds 2 magnesium ions per subunit.</text>
</comment>
<comment type="pathway">
    <text evidence="1">Amino-acid biosynthesis; L-isoleucine biosynthesis; L-isoleucine from 2-oxobutanoate: step 2/4.</text>
</comment>
<comment type="pathway">
    <text evidence="1">Amino-acid biosynthesis; L-valine biosynthesis; L-valine from pyruvate: step 2/4.</text>
</comment>
<comment type="similarity">
    <text evidence="1">Belongs to the ketol-acid reductoisomerase family.</text>
</comment>
<protein>
    <recommendedName>
        <fullName evidence="1">Ketol-acid reductoisomerase (NADP(+))</fullName>
        <shortName evidence="1">KARI</shortName>
        <ecNumber evidence="1">1.1.1.86</ecNumber>
    </recommendedName>
    <alternativeName>
        <fullName evidence="1">Acetohydroxy-acid isomeroreductase</fullName>
        <shortName evidence="1">AHIR</shortName>
    </alternativeName>
    <alternativeName>
        <fullName evidence="1">Alpha-keto-beta-hydroxylacyl reductoisomerase</fullName>
    </alternativeName>
    <alternativeName>
        <fullName evidence="1">Ketol-acid reductoisomerase type 1</fullName>
    </alternativeName>
    <alternativeName>
        <fullName evidence="1">Ketol-acid reductoisomerase type I</fullName>
    </alternativeName>
</protein>
<evidence type="ECO:0000255" key="1">
    <source>
        <dbReference type="HAMAP-Rule" id="MF_00435"/>
    </source>
</evidence>
<evidence type="ECO:0000255" key="2">
    <source>
        <dbReference type="PROSITE-ProRule" id="PRU01197"/>
    </source>
</evidence>
<evidence type="ECO:0000255" key="3">
    <source>
        <dbReference type="PROSITE-ProRule" id="PRU01198"/>
    </source>
</evidence>